<dbReference type="EC" id="4.2.1.10" evidence="1"/>
<dbReference type="EMBL" id="CP001615">
    <property type="protein sequence ID" value="ACQ69460.1"/>
    <property type="molecule type" value="Genomic_DNA"/>
</dbReference>
<dbReference type="RefSeq" id="WP_012726579.1">
    <property type="nucleotide sequence ID" value="NC_012673.1"/>
</dbReference>
<dbReference type="SMR" id="C4L3G2"/>
<dbReference type="STRING" id="360911.EAT1b_0528"/>
<dbReference type="GeneID" id="94371860"/>
<dbReference type="KEGG" id="eat:EAT1b_0528"/>
<dbReference type="eggNOG" id="COG0757">
    <property type="taxonomic scope" value="Bacteria"/>
</dbReference>
<dbReference type="HOGENOM" id="CLU_090968_2_0_9"/>
<dbReference type="OrthoDB" id="9790793at2"/>
<dbReference type="UniPathway" id="UPA00053">
    <property type="reaction ID" value="UER00086"/>
</dbReference>
<dbReference type="Proteomes" id="UP000000716">
    <property type="component" value="Chromosome"/>
</dbReference>
<dbReference type="GO" id="GO:0003855">
    <property type="term" value="F:3-dehydroquinate dehydratase activity"/>
    <property type="evidence" value="ECO:0007669"/>
    <property type="project" value="UniProtKB-UniRule"/>
</dbReference>
<dbReference type="GO" id="GO:0008652">
    <property type="term" value="P:amino acid biosynthetic process"/>
    <property type="evidence" value="ECO:0007669"/>
    <property type="project" value="UniProtKB-KW"/>
</dbReference>
<dbReference type="GO" id="GO:0009073">
    <property type="term" value="P:aromatic amino acid family biosynthetic process"/>
    <property type="evidence" value="ECO:0007669"/>
    <property type="project" value="UniProtKB-KW"/>
</dbReference>
<dbReference type="GO" id="GO:0009423">
    <property type="term" value="P:chorismate biosynthetic process"/>
    <property type="evidence" value="ECO:0007669"/>
    <property type="project" value="UniProtKB-UniRule"/>
</dbReference>
<dbReference type="GO" id="GO:0019631">
    <property type="term" value="P:quinate catabolic process"/>
    <property type="evidence" value="ECO:0007669"/>
    <property type="project" value="TreeGrafter"/>
</dbReference>
<dbReference type="CDD" id="cd00466">
    <property type="entry name" value="DHQase_II"/>
    <property type="match status" value="1"/>
</dbReference>
<dbReference type="Gene3D" id="3.40.50.9100">
    <property type="entry name" value="Dehydroquinase, class II"/>
    <property type="match status" value="1"/>
</dbReference>
<dbReference type="HAMAP" id="MF_00169">
    <property type="entry name" value="AroQ"/>
    <property type="match status" value="1"/>
</dbReference>
<dbReference type="InterPro" id="IPR001874">
    <property type="entry name" value="DHquinase_II"/>
</dbReference>
<dbReference type="InterPro" id="IPR018509">
    <property type="entry name" value="DHquinase_II_CS"/>
</dbReference>
<dbReference type="InterPro" id="IPR036441">
    <property type="entry name" value="DHquinase_II_sf"/>
</dbReference>
<dbReference type="NCBIfam" id="TIGR01088">
    <property type="entry name" value="aroQ"/>
    <property type="match status" value="1"/>
</dbReference>
<dbReference type="NCBIfam" id="NF003805">
    <property type="entry name" value="PRK05395.1-2"/>
    <property type="match status" value="1"/>
</dbReference>
<dbReference type="NCBIfam" id="NF003806">
    <property type="entry name" value="PRK05395.1-3"/>
    <property type="match status" value="1"/>
</dbReference>
<dbReference type="NCBIfam" id="NF003807">
    <property type="entry name" value="PRK05395.1-4"/>
    <property type="match status" value="1"/>
</dbReference>
<dbReference type="PANTHER" id="PTHR21272">
    <property type="entry name" value="CATABOLIC 3-DEHYDROQUINASE"/>
    <property type="match status" value="1"/>
</dbReference>
<dbReference type="PANTHER" id="PTHR21272:SF3">
    <property type="entry name" value="CATABOLIC 3-DEHYDROQUINASE"/>
    <property type="match status" value="1"/>
</dbReference>
<dbReference type="Pfam" id="PF01220">
    <property type="entry name" value="DHquinase_II"/>
    <property type="match status" value="1"/>
</dbReference>
<dbReference type="PIRSF" id="PIRSF001399">
    <property type="entry name" value="DHquinase_II"/>
    <property type="match status" value="1"/>
</dbReference>
<dbReference type="SUPFAM" id="SSF52304">
    <property type="entry name" value="Type II 3-dehydroquinate dehydratase"/>
    <property type="match status" value="1"/>
</dbReference>
<dbReference type="PROSITE" id="PS01029">
    <property type="entry name" value="DEHYDROQUINASE_II"/>
    <property type="match status" value="1"/>
</dbReference>
<gene>
    <name evidence="1" type="primary">aroQ</name>
    <name type="ordered locus">EAT1b_0528</name>
</gene>
<organism>
    <name type="scientific">Exiguobacterium sp. (strain ATCC BAA-1283 / AT1b)</name>
    <dbReference type="NCBI Taxonomy" id="360911"/>
    <lineage>
        <taxon>Bacteria</taxon>
        <taxon>Bacillati</taxon>
        <taxon>Bacillota</taxon>
        <taxon>Bacilli</taxon>
        <taxon>Bacillales</taxon>
        <taxon>Bacillales Family XII. Incertae Sedis</taxon>
        <taxon>Exiguobacterium</taxon>
    </lineage>
</organism>
<feature type="chain" id="PRO_1000203675" description="3-dehydroquinate dehydratase">
    <location>
        <begin position="1"/>
        <end position="145"/>
    </location>
</feature>
<feature type="active site" description="Proton acceptor" evidence="1">
    <location>
        <position position="22"/>
    </location>
</feature>
<feature type="active site" description="Proton donor" evidence="1">
    <location>
        <position position="97"/>
    </location>
</feature>
<feature type="binding site" evidence="1">
    <location>
        <position position="71"/>
    </location>
    <ligand>
        <name>substrate</name>
    </ligand>
</feature>
<feature type="binding site" evidence="1">
    <location>
        <position position="77"/>
    </location>
    <ligand>
        <name>substrate</name>
    </ligand>
</feature>
<feature type="binding site" evidence="1">
    <location>
        <position position="84"/>
    </location>
    <ligand>
        <name>substrate</name>
    </ligand>
</feature>
<feature type="binding site" evidence="1">
    <location>
        <begin position="98"/>
        <end position="99"/>
    </location>
    <ligand>
        <name>substrate</name>
    </ligand>
</feature>
<feature type="binding site" evidence="1">
    <location>
        <position position="108"/>
    </location>
    <ligand>
        <name>substrate</name>
    </ligand>
</feature>
<feature type="site" description="Transition state stabilizer" evidence="1">
    <location>
        <position position="17"/>
    </location>
</feature>
<name>AROQ_EXISA</name>
<proteinExistence type="inferred from homology"/>
<evidence type="ECO:0000255" key="1">
    <source>
        <dbReference type="HAMAP-Rule" id="MF_00169"/>
    </source>
</evidence>
<comment type="function">
    <text evidence="1">Catalyzes a trans-dehydration via an enolate intermediate.</text>
</comment>
<comment type="catalytic activity">
    <reaction evidence="1">
        <text>3-dehydroquinate = 3-dehydroshikimate + H2O</text>
        <dbReference type="Rhea" id="RHEA:21096"/>
        <dbReference type="ChEBI" id="CHEBI:15377"/>
        <dbReference type="ChEBI" id="CHEBI:16630"/>
        <dbReference type="ChEBI" id="CHEBI:32364"/>
        <dbReference type="EC" id="4.2.1.10"/>
    </reaction>
</comment>
<comment type="pathway">
    <text evidence="1">Metabolic intermediate biosynthesis; chorismate biosynthesis; chorismate from D-erythrose 4-phosphate and phosphoenolpyruvate: step 3/7.</text>
</comment>
<comment type="subunit">
    <text evidence="1">Homododecamer.</text>
</comment>
<comment type="similarity">
    <text evidence="1">Belongs to the type-II 3-dehydroquinase family.</text>
</comment>
<sequence length="145" mass="15964">MRILVLNGPNLNLLGRREPDVYGDVSLKGLAAELMLRAPEDVELTFKQSNHEGDLIDALHDAFDYEGVILNAGAYTHTSIAIRDAISAIAAPVVEVHISNVHARETFRHESKLAAVCIGVITGFGLTSYTLAMHALIEHWRNRHD</sequence>
<protein>
    <recommendedName>
        <fullName evidence="1">3-dehydroquinate dehydratase</fullName>
        <shortName evidence="1">3-dehydroquinase</shortName>
        <ecNumber evidence="1">4.2.1.10</ecNumber>
    </recommendedName>
    <alternativeName>
        <fullName evidence="1">Type II DHQase</fullName>
    </alternativeName>
</protein>
<accession>C4L3G2</accession>
<keyword id="KW-0028">Amino-acid biosynthesis</keyword>
<keyword id="KW-0057">Aromatic amino acid biosynthesis</keyword>
<keyword id="KW-0456">Lyase</keyword>
<reference key="1">
    <citation type="journal article" date="2011" name="J. Bacteriol.">
        <title>Complete genome sequence of the Thermophilic Bacterium Exiguobacterium sp. AT1b.</title>
        <authorList>
            <person name="Vishnivetskaya T.A."/>
            <person name="Lucas S."/>
            <person name="Copeland A."/>
            <person name="Lapidus A."/>
            <person name="Glavina del Rio T."/>
            <person name="Dalin E."/>
            <person name="Tice H."/>
            <person name="Bruce D.C."/>
            <person name="Goodwin L.A."/>
            <person name="Pitluck S."/>
            <person name="Saunders E."/>
            <person name="Brettin T."/>
            <person name="Detter C."/>
            <person name="Han C."/>
            <person name="Larimer F."/>
            <person name="Land M.L."/>
            <person name="Hauser L.J."/>
            <person name="Kyrpides N.C."/>
            <person name="Ovchinnikova G."/>
            <person name="Kathariou S."/>
            <person name="Ramaley R.F."/>
            <person name="Rodrigues D.F."/>
            <person name="Hendrix C."/>
            <person name="Richardson P."/>
            <person name="Tiedje J.M."/>
        </authorList>
    </citation>
    <scope>NUCLEOTIDE SEQUENCE [LARGE SCALE GENOMIC DNA]</scope>
    <source>
        <strain>ATCC BAA-1283 / AT1b</strain>
    </source>
</reference>